<organism>
    <name type="scientific">Halobacterium salinarum (strain ATCC 700922 / JCM 11081 / NRC-1)</name>
    <name type="common">Halobacterium halobium</name>
    <dbReference type="NCBI Taxonomy" id="64091"/>
    <lineage>
        <taxon>Archaea</taxon>
        <taxon>Methanobacteriati</taxon>
        <taxon>Methanobacteriota</taxon>
        <taxon>Stenosarchaea group</taxon>
        <taxon>Halobacteria</taxon>
        <taxon>Halobacteriales</taxon>
        <taxon>Halobacteriaceae</taxon>
        <taxon>Halobacterium</taxon>
        <taxon>Halobacterium salinarum NRC-34001</taxon>
    </lineage>
</organism>
<reference key="1">
    <citation type="journal article" date="2000" name="Proc. Natl. Acad. Sci. U.S.A.">
        <title>Genome sequence of Halobacterium species NRC-1.</title>
        <authorList>
            <person name="Ng W.V."/>
            <person name="Kennedy S.P."/>
            <person name="Mahairas G.G."/>
            <person name="Berquist B."/>
            <person name="Pan M."/>
            <person name="Shukla H.D."/>
            <person name="Lasky S.R."/>
            <person name="Baliga N.S."/>
            <person name="Thorsson V."/>
            <person name="Sbrogna J."/>
            <person name="Swartzell S."/>
            <person name="Weir D."/>
            <person name="Hall J."/>
            <person name="Dahl T.A."/>
            <person name="Welti R."/>
            <person name="Goo Y.A."/>
            <person name="Leithauser B."/>
            <person name="Keller K."/>
            <person name="Cruz R."/>
            <person name="Danson M.J."/>
            <person name="Hough D.W."/>
            <person name="Maddocks D.G."/>
            <person name="Jablonski P.E."/>
            <person name="Krebs M.P."/>
            <person name="Angevine C.M."/>
            <person name="Dale H."/>
            <person name="Isenbarger T.A."/>
            <person name="Peck R.F."/>
            <person name="Pohlschroder M."/>
            <person name="Spudich J.L."/>
            <person name="Jung K.-H."/>
            <person name="Alam M."/>
            <person name="Freitas T."/>
            <person name="Hou S."/>
            <person name="Daniels C.J."/>
            <person name="Dennis P.P."/>
            <person name="Omer A.D."/>
            <person name="Ebhardt H."/>
            <person name="Lowe T.M."/>
            <person name="Liang P."/>
            <person name="Riley M."/>
            <person name="Hood L."/>
            <person name="DasSarma S."/>
        </authorList>
    </citation>
    <scope>NUCLEOTIDE SEQUENCE [LARGE SCALE GENOMIC DNA]</scope>
    <source>
        <strain>ATCC 700922 / JCM 11081 / NRC-1</strain>
    </source>
</reference>
<comment type="function">
    <text evidence="1">Molecular chaperone capable of stabilizing a range of proteins. Seems to fulfill an ATP-independent, HSP70-like function in archaeal de novo protein folding (By similarity).</text>
</comment>
<comment type="subunit">
    <text evidence="1">Heterohexamer of two alpha and four beta subunits.</text>
</comment>
<comment type="subcellular location">
    <subcellularLocation>
        <location evidence="1">Cytoplasm</location>
    </subcellularLocation>
</comment>
<comment type="similarity">
    <text evidence="2">Belongs to the prefoldin subunit beta family.</text>
</comment>
<evidence type="ECO:0000250" key="1"/>
<evidence type="ECO:0000305" key="2"/>
<keyword id="KW-0143">Chaperone</keyword>
<keyword id="KW-0963">Cytoplasm</keyword>
<keyword id="KW-1185">Reference proteome</keyword>
<proteinExistence type="inferred from homology"/>
<sequence>MQGNLPPEAQEKLEQLQDLQEKAQNVATQKQQAEQQLSEAETALDALGDIEESTTMYREVGELLVETEYDNAHDDLDEKVSDLEVRVETLQKQEDRVQEQFESLQEELQDMLGGAGGAMGGGPGA</sequence>
<name>PFDB_HALSA</name>
<dbReference type="EMBL" id="AE004437">
    <property type="protein sequence ID" value="AAG18836.1"/>
    <property type="molecule type" value="Genomic_DNA"/>
</dbReference>
<dbReference type="PIR" id="H84183">
    <property type="entry name" value="H84183"/>
</dbReference>
<dbReference type="RefSeq" id="WP_010902129.1">
    <property type="nucleotide sequence ID" value="NC_002607.1"/>
</dbReference>
<dbReference type="SMR" id="Q9HSH0"/>
<dbReference type="STRING" id="64091.VNG_0234C"/>
<dbReference type="PaxDb" id="64091-VNG_0234C"/>
<dbReference type="KEGG" id="hal:VNG_0234C"/>
<dbReference type="PATRIC" id="fig|64091.14.peg.169"/>
<dbReference type="HOGENOM" id="CLU_131909_0_1_2"/>
<dbReference type="InParanoid" id="Q9HSH0"/>
<dbReference type="OrthoDB" id="204796at2157"/>
<dbReference type="PhylomeDB" id="Q9HSH0"/>
<dbReference type="Proteomes" id="UP000000554">
    <property type="component" value="Chromosome"/>
</dbReference>
<dbReference type="GO" id="GO:0005737">
    <property type="term" value="C:cytoplasm"/>
    <property type="evidence" value="ECO:0000318"/>
    <property type="project" value="GO_Central"/>
</dbReference>
<dbReference type="GO" id="GO:0016272">
    <property type="term" value="C:prefoldin complex"/>
    <property type="evidence" value="ECO:0007669"/>
    <property type="project" value="UniProtKB-UniRule"/>
</dbReference>
<dbReference type="GO" id="GO:0044183">
    <property type="term" value="F:protein folding chaperone"/>
    <property type="evidence" value="ECO:0000318"/>
    <property type="project" value="GO_Central"/>
</dbReference>
<dbReference type="GO" id="GO:0051082">
    <property type="term" value="F:unfolded protein binding"/>
    <property type="evidence" value="ECO:0000318"/>
    <property type="project" value="GO_Central"/>
</dbReference>
<dbReference type="GO" id="GO:0006457">
    <property type="term" value="P:protein folding"/>
    <property type="evidence" value="ECO:0000318"/>
    <property type="project" value="GO_Central"/>
</dbReference>
<dbReference type="CDD" id="cd23162">
    <property type="entry name" value="Prefoldin_beta_GimC"/>
    <property type="match status" value="1"/>
</dbReference>
<dbReference type="Gene3D" id="1.10.287.370">
    <property type="match status" value="1"/>
</dbReference>
<dbReference type="HAMAP" id="MF_00307">
    <property type="entry name" value="PfdB"/>
    <property type="match status" value="1"/>
</dbReference>
<dbReference type="InterPro" id="IPR002777">
    <property type="entry name" value="PFD_beta-like"/>
</dbReference>
<dbReference type="InterPro" id="IPR012713">
    <property type="entry name" value="PfdB"/>
</dbReference>
<dbReference type="InterPro" id="IPR009053">
    <property type="entry name" value="Prefoldin"/>
</dbReference>
<dbReference type="NCBIfam" id="TIGR02338">
    <property type="entry name" value="gimC_beta"/>
    <property type="match status" value="1"/>
</dbReference>
<dbReference type="PANTHER" id="PTHR20903:SF0">
    <property type="entry name" value="PREFOLDIN SUBUNIT 1"/>
    <property type="match status" value="1"/>
</dbReference>
<dbReference type="PANTHER" id="PTHR20903">
    <property type="entry name" value="PREFOLDIN SUBUNIT 1-RELATED"/>
    <property type="match status" value="1"/>
</dbReference>
<dbReference type="Pfam" id="PF01920">
    <property type="entry name" value="Prefoldin_2"/>
    <property type="match status" value="1"/>
</dbReference>
<dbReference type="SUPFAM" id="SSF46579">
    <property type="entry name" value="Prefoldin"/>
    <property type="match status" value="1"/>
</dbReference>
<accession>Q9HSH0</accession>
<gene>
    <name type="primary">pfdB</name>
    <name type="ordered locus">VNG_0234C</name>
</gene>
<feature type="chain" id="PRO_0000124858" description="Prefoldin subunit beta">
    <location>
        <begin position="1"/>
        <end position="125"/>
    </location>
</feature>
<protein>
    <recommendedName>
        <fullName>Prefoldin subunit beta</fullName>
    </recommendedName>
    <alternativeName>
        <fullName>GimC subunit beta</fullName>
    </alternativeName>
</protein>